<feature type="chain" id="PRO_0000077439" description="Carbonic anhydrase-related protein 10">
    <location>
        <begin position="1"/>
        <end position="328"/>
    </location>
</feature>
<feature type="domain" description="Alpha-carbonic anhydrase" evidence="2">
    <location>
        <begin position="31"/>
        <end position="301"/>
    </location>
</feature>
<comment type="function">
    <text evidence="1">Does not have a catalytic activity.</text>
</comment>
<comment type="similarity">
    <text evidence="3">Belongs to the alpha-carbonic anhydrase family.</text>
</comment>
<protein>
    <recommendedName>
        <fullName>Carbonic anhydrase-related protein 10</fullName>
    </recommendedName>
</protein>
<organism>
    <name type="scientific">Pongo abelii</name>
    <name type="common">Sumatran orangutan</name>
    <name type="synonym">Pongo pygmaeus abelii</name>
    <dbReference type="NCBI Taxonomy" id="9601"/>
    <lineage>
        <taxon>Eukaryota</taxon>
        <taxon>Metazoa</taxon>
        <taxon>Chordata</taxon>
        <taxon>Craniata</taxon>
        <taxon>Vertebrata</taxon>
        <taxon>Euteleostomi</taxon>
        <taxon>Mammalia</taxon>
        <taxon>Eutheria</taxon>
        <taxon>Euarchontoglires</taxon>
        <taxon>Primates</taxon>
        <taxon>Haplorrhini</taxon>
        <taxon>Catarrhini</taxon>
        <taxon>Hominidae</taxon>
        <taxon>Pongo</taxon>
    </lineage>
</organism>
<gene>
    <name type="primary">CA10</name>
</gene>
<sequence length="328" mass="37563">MEIVWEVLFLLQANFIVCISAQQNSPKIHEGWWAYKEVVQGSFVPVPSFWGLVNSAWNLCSVGKRQSPVNIETSHMIFDPFLTPLRINTGGRKVSGTMYNTGRHVSLRLDKEHLVNISGGPMTYSHRLEEIRLHFGSEDSQGSEHLLNGQAFSGEVQLIHYNHELYTNVTEAAKSPNGLVVVSIFIKVSDSSNPFLNRMLNRDTITRITYKNDAYLLQGLNIEELYPETSSFITYDGSMTIPPCYETASWIIMNKPVYITRMQMHSLRLLSQNQPSQIFLSMSDNFRPVQPLNNRCIRTNINFSLQGKDCPNNRAQKLQYRVNEWLLK</sequence>
<keyword id="KW-1185">Reference proteome</keyword>
<reference key="1">
    <citation type="submission" date="2004-11" db="EMBL/GenBank/DDBJ databases">
        <authorList>
            <consortium name="The German cDNA consortium"/>
        </authorList>
    </citation>
    <scope>NUCLEOTIDE SEQUENCE [LARGE SCALE MRNA]</scope>
    <source>
        <tissue>Brain cortex</tissue>
    </source>
</reference>
<name>CAH10_PONAB</name>
<proteinExistence type="evidence at transcript level"/>
<accession>Q5R4U0</accession>
<dbReference type="EMBL" id="CR861151">
    <property type="protein sequence ID" value="CAH93226.1"/>
    <property type="molecule type" value="mRNA"/>
</dbReference>
<dbReference type="RefSeq" id="XP_024089907.1">
    <property type="nucleotide sequence ID" value="XM_024234139.3"/>
</dbReference>
<dbReference type="SMR" id="Q5R4U0"/>
<dbReference type="FunCoup" id="Q5R4U0">
    <property type="interactions" value="44"/>
</dbReference>
<dbReference type="STRING" id="9601.ENSPPYP00000009286"/>
<dbReference type="Ensembl" id="ENSPPYT00000009660.3">
    <property type="protein sequence ID" value="ENSPPYP00000009286.2"/>
    <property type="gene ID" value="ENSPPYG00000008263.3"/>
</dbReference>
<dbReference type="GeneID" id="100171666"/>
<dbReference type="eggNOG" id="KOG0382">
    <property type="taxonomic scope" value="Eukaryota"/>
</dbReference>
<dbReference type="GeneTree" id="ENSGT00940000155223"/>
<dbReference type="HOGENOM" id="CLU_039326_7_1_1"/>
<dbReference type="InParanoid" id="Q5R4U0"/>
<dbReference type="OMA" id="MYYQANT"/>
<dbReference type="OrthoDB" id="5978072at2759"/>
<dbReference type="TreeFam" id="TF352926"/>
<dbReference type="Proteomes" id="UP000001595">
    <property type="component" value="Chromosome 17"/>
</dbReference>
<dbReference type="GO" id="GO:0004089">
    <property type="term" value="F:carbonate dehydratase activity"/>
    <property type="evidence" value="ECO:0007669"/>
    <property type="project" value="InterPro"/>
</dbReference>
<dbReference type="GO" id="GO:0008270">
    <property type="term" value="F:zinc ion binding"/>
    <property type="evidence" value="ECO:0007669"/>
    <property type="project" value="InterPro"/>
</dbReference>
<dbReference type="GO" id="GO:0006730">
    <property type="term" value="P:one-carbon metabolic process"/>
    <property type="evidence" value="ECO:0007669"/>
    <property type="project" value="TreeGrafter"/>
</dbReference>
<dbReference type="CDD" id="cd03121">
    <property type="entry name" value="alpha_CARP_X_XI_like"/>
    <property type="match status" value="1"/>
</dbReference>
<dbReference type="FunFam" id="3.10.200.10:FF:000002">
    <property type="entry name" value="Carbonic anhydrase-related protein 10"/>
    <property type="match status" value="1"/>
</dbReference>
<dbReference type="Gene3D" id="3.10.200.10">
    <property type="entry name" value="Alpha carbonic anhydrase"/>
    <property type="match status" value="1"/>
</dbReference>
<dbReference type="InterPro" id="IPR041878">
    <property type="entry name" value="Alpha_CARP_X/XI"/>
</dbReference>
<dbReference type="InterPro" id="IPR001148">
    <property type="entry name" value="CA_dom"/>
</dbReference>
<dbReference type="InterPro" id="IPR036398">
    <property type="entry name" value="CA_dom_sf"/>
</dbReference>
<dbReference type="InterPro" id="IPR023561">
    <property type="entry name" value="Carbonic_anhydrase_a-class"/>
</dbReference>
<dbReference type="PANTHER" id="PTHR18952">
    <property type="entry name" value="CARBONIC ANHYDRASE"/>
    <property type="match status" value="1"/>
</dbReference>
<dbReference type="PANTHER" id="PTHR18952:SF91">
    <property type="entry name" value="CARBONIC ANHYDRASE-RELATED PROTEIN 10"/>
    <property type="match status" value="1"/>
</dbReference>
<dbReference type="Pfam" id="PF00194">
    <property type="entry name" value="Carb_anhydrase"/>
    <property type="match status" value="1"/>
</dbReference>
<dbReference type="SMART" id="SM01057">
    <property type="entry name" value="Carb_anhydrase"/>
    <property type="match status" value="1"/>
</dbReference>
<dbReference type="SUPFAM" id="SSF51069">
    <property type="entry name" value="Carbonic anhydrase"/>
    <property type="match status" value="1"/>
</dbReference>
<dbReference type="PROSITE" id="PS51144">
    <property type="entry name" value="ALPHA_CA_2"/>
    <property type="match status" value="1"/>
</dbReference>
<evidence type="ECO:0000250" key="1"/>
<evidence type="ECO:0000255" key="2">
    <source>
        <dbReference type="PROSITE-ProRule" id="PRU01134"/>
    </source>
</evidence>
<evidence type="ECO:0000305" key="3"/>